<feature type="chain" id="PRO_1000099686" description="3-phosphoshikimate 1-carboxyvinyltransferase">
    <location>
        <begin position="1"/>
        <end position="433"/>
    </location>
</feature>
<feature type="active site" description="Proton acceptor" evidence="1">
    <location>
        <position position="310"/>
    </location>
</feature>
<feature type="binding site" evidence="1">
    <location>
        <position position="21"/>
    </location>
    <ligand>
        <name>3-phosphoshikimate</name>
        <dbReference type="ChEBI" id="CHEBI:145989"/>
    </ligand>
</feature>
<feature type="binding site" evidence="1">
    <location>
        <position position="21"/>
    </location>
    <ligand>
        <name>phosphoenolpyruvate</name>
        <dbReference type="ChEBI" id="CHEBI:58702"/>
    </ligand>
</feature>
<feature type="binding site" evidence="1">
    <location>
        <position position="22"/>
    </location>
    <ligand>
        <name>3-phosphoshikimate</name>
        <dbReference type="ChEBI" id="CHEBI:145989"/>
    </ligand>
</feature>
<feature type="binding site" evidence="1">
    <location>
        <position position="26"/>
    </location>
    <ligand>
        <name>3-phosphoshikimate</name>
        <dbReference type="ChEBI" id="CHEBI:145989"/>
    </ligand>
</feature>
<feature type="binding site" evidence="1">
    <location>
        <position position="96"/>
    </location>
    <ligand>
        <name>phosphoenolpyruvate</name>
        <dbReference type="ChEBI" id="CHEBI:58702"/>
    </ligand>
</feature>
<feature type="binding site" evidence="1">
    <location>
        <position position="124"/>
    </location>
    <ligand>
        <name>phosphoenolpyruvate</name>
        <dbReference type="ChEBI" id="CHEBI:58702"/>
    </ligand>
</feature>
<feature type="binding site" evidence="1">
    <location>
        <position position="167"/>
    </location>
    <ligand>
        <name>3-phosphoshikimate</name>
        <dbReference type="ChEBI" id="CHEBI:145989"/>
    </ligand>
</feature>
<feature type="binding site" evidence="1">
    <location>
        <position position="168"/>
    </location>
    <ligand>
        <name>3-phosphoshikimate</name>
        <dbReference type="ChEBI" id="CHEBI:145989"/>
    </ligand>
</feature>
<feature type="binding site" evidence="1">
    <location>
        <position position="169"/>
    </location>
    <ligand>
        <name>3-phosphoshikimate</name>
        <dbReference type="ChEBI" id="CHEBI:145989"/>
    </ligand>
</feature>
<feature type="binding site" evidence="1">
    <location>
        <position position="169"/>
    </location>
    <ligand>
        <name>phosphoenolpyruvate</name>
        <dbReference type="ChEBI" id="CHEBI:58702"/>
    </ligand>
</feature>
<feature type="binding site" evidence="1">
    <location>
        <position position="195"/>
    </location>
    <ligand>
        <name>3-phosphoshikimate</name>
        <dbReference type="ChEBI" id="CHEBI:145989"/>
    </ligand>
</feature>
<feature type="binding site" evidence="1">
    <location>
        <position position="310"/>
    </location>
    <ligand>
        <name>3-phosphoshikimate</name>
        <dbReference type="ChEBI" id="CHEBI:145989"/>
    </ligand>
</feature>
<feature type="binding site" evidence="1">
    <location>
        <position position="337"/>
    </location>
    <ligand>
        <name>3-phosphoshikimate</name>
        <dbReference type="ChEBI" id="CHEBI:145989"/>
    </ligand>
</feature>
<feature type="binding site" evidence="1">
    <location>
        <position position="341"/>
    </location>
    <ligand>
        <name>phosphoenolpyruvate</name>
        <dbReference type="ChEBI" id="CHEBI:58702"/>
    </ligand>
</feature>
<feature type="binding site" evidence="1">
    <location>
        <position position="384"/>
    </location>
    <ligand>
        <name>phosphoenolpyruvate</name>
        <dbReference type="ChEBI" id="CHEBI:58702"/>
    </ligand>
</feature>
<feature type="binding site" evidence="1">
    <location>
        <position position="410"/>
    </location>
    <ligand>
        <name>phosphoenolpyruvate</name>
        <dbReference type="ChEBI" id="CHEBI:58702"/>
    </ligand>
</feature>
<sequence>MGTFKIYPGKLKGEVKIPPSKSMAHRGVICAALGDGISKIRNINYSDDIRATINAMRSLGAIITKEDEYLHIIGIKSEKCKKNIELNRTIDCNESGSTLRFLVPISCIFEGSSRFIGKGNLGKRPLDTYYEIFDNQGIKYSYKKGKLDLRIQGILKYGEFKLRGDISSQFISGMLFTLPLLEGDSKIIITTELESKGYIDLTLSAMSDFGIEIINNNYREFIIKGNQTYKSIDYRIEGDYSQAAFFLVADALKSEVFINDLKLESLQGDKEVIEILERMNMKIKNIDNSLLGIPRENLEATIIDGSQCPDIIPVISLAASLCNGRTEIINVGRLRIKECDRLSAVASELNKLGANIIEKEDSLIIDGVKTLKGGVKVWSHKDHRIAMMLAIASTVCMEPIILEDYECISKSYPEFFDDFKALGGNFHEWNLGE</sequence>
<dbReference type="EC" id="2.5.1.19" evidence="1"/>
<dbReference type="EMBL" id="CP001078">
    <property type="protein sequence ID" value="ACD52475.1"/>
    <property type="molecule type" value="Genomic_DNA"/>
</dbReference>
<dbReference type="RefSeq" id="WP_012450613.1">
    <property type="nucleotide sequence ID" value="NC_010723.1"/>
</dbReference>
<dbReference type="SMR" id="B2UYK7"/>
<dbReference type="KEGG" id="cbt:CLH_2892"/>
<dbReference type="HOGENOM" id="CLU_024321_0_0_9"/>
<dbReference type="UniPathway" id="UPA00053">
    <property type="reaction ID" value="UER00089"/>
</dbReference>
<dbReference type="GO" id="GO:0005737">
    <property type="term" value="C:cytoplasm"/>
    <property type="evidence" value="ECO:0007669"/>
    <property type="project" value="UniProtKB-SubCell"/>
</dbReference>
<dbReference type="GO" id="GO:0003866">
    <property type="term" value="F:3-phosphoshikimate 1-carboxyvinyltransferase activity"/>
    <property type="evidence" value="ECO:0007669"/>
    <property type="project" value="UniProtKB-UniRule"/>
</dbReference>
<dbReference type="GO" id="GO:0008652">
    <property type="term" value="P:amino acid biosynthetic process"/>
    <property type="evidence" value="ECO:0007669"/>
    <property type="project" value="UniProtKB-KW"/>
</dbReference>
<dbReference type="GO" id="GO:0009073">
    <property type="term" value="P:aromatic amino acid family biosynthetic process"/>
    <property type="evidence" value="ECO:0007669"/>
    <property type="project" value="UniProtKB-KW"/>
</dbReference>
<dbReference type="GO" id="GO:0009423">
    <property type="term" value="P:chorismate biosynthetic process"/>
    <property type="evidence" value="ECO:0007669"/>
    <property type="project" value="UniProtKB-UniRule"/>
</dbReference>
<dbReference type="CDD" id="cd01556">
    <property type="entry name" value="EPSP_synthase"/>
    <property type="match status" value="1"/>
</dbReference>
<dbReference type="Gene3D" id="3.65.10.10">
    <property type="entry name" value="Enolpyruvate transferase domain"/>
    <property type="match status" value="2"/>
</dbReference>
<dbReference type="HAMAP" id="MF_00210">
    <property type="entry name" value="EPSP_synth"/>
    <property type="match status" value="1"/>
</dbReference>
<dbReference type="InterPro" id="IPR001986">
    <property type="entry name" value="Enolpyruvate_Tfrase_dom"/>
</dbReference>
<dbReference type="InterPro" id="IPR036968">
    <property type="entry name" value="Enolpyruvate_Tfrase_sf"/>
</dbReference>
<dbReference type="InterPro" id="IPR006264">
    <property type="entry name" value="EPSP_synthase"/>
</dbReference>
<dbReference type="InterPro" id="IPR023193">
    <property type="entry name" value="EPSP_synthase_CS"/>
</dbReference>
<dbReference type="InterPro" id="IPR013792">
    <property type="entry name" value="RNA3'P_cycl/enolpyr_Trfase_a/b"/>
</dbReference>
<dbReference type="NCBIfam" id="TIGR01356">
    <property type="entry name" value="aroA"/>
    <property type="match status" value="1"/>
</dbReference>
<dbReference type="PANTHER" id="PTHR21090">
    <property type="entry name" value="AROM/DEHYDROQUINATE SYNTHASE"/>
    <property type="match status" value="1"/>
</dbReference>
<dbReference type="PANTHER" id="PTHR21090:SF5">
    <property type="entry name" value="PENTAFUNCTIONAL AROM POLYPEPTIDE"/>
    <property type="match status" value="1"/>
</dbReference>
<dbReference type="Pfam" id="PF00275">
    <property type="entry name" value="EPSP_synthase"/>
    <property type="match status" value="1"/>
</dbReference>
<dbReference type="PIRSF" id="PIRSF000505">
    <property type="entry name" value="EPSPS"/>
    <property type="match status" value="1"/>
</dbReference>
<dbReference type="SUPFAM" id="SSF55205">
    <property type="entry name" value="EPT/RTPC-like"/>
    <property type="match status" value="1"/>
</dbReference>
<dbReference type="PROSITE" id="PS00885">
    <property type="entry name" value="EPSP_SYNTHASE_2"/>
    <property type="match status" value="1"/>
</dbReference>
<organism>
    <name type="scientific">Clostridium botulinum (strain Alaska E43 / Type E3)</name>
    <dbReference type="NCBI Taxonomy" id="508767"/>
    <lineage>
        <taxon>Bacteria</taxon>
        <taxon>Bacillati</taxon>
        <taxon>Bacillota</taxon>
        <taxon>Clostridia</taxon>
        <taxon>Eubacteriales</taxon>
        <taxon>Clostridiaceae</taxon>
        <taxon>Clostridium</taxon>
    </lineage>
</organism>
<protein>
    <recommendedName>
        <fullName evidence="1">3-phosphoshikimate 1-carboxyvinyltransferase</fullName>
        <ecNumber evidence="1">2.5.1.19</ecNumber>
    </recommendedName>
    <alternativeName>
        <fullName evidence="1">5-enolpyruvylshikimate-3-phosphate synthase</fullName>
        <shortName evidence="1">EPSP synthase</shortName>
        <shortName evidence="1">EPSPS</shortName>
    </alternativeName>
</protein>
<gene>
    <name evidence="1" type="primary">aroA</name>
    <name type="ordered locus">CLH_2892</name>
</gene>
<reference key="1">
    <citation type="submission" date="2008-05" db="EMBL/GenBank/DDBJ databases">
        <title>Complete genome sequence of Clostridium botulinum E3 str. Alaska E43.</title>
        <authorList>
            <person name="Brinkac L.M."/>
            <person name="Brown J.L."/>
            <person name="Bruce D."/>
            <person name="Detter C."/>
            <person name="Munk C."/>
            <person name="Smith L.A."/>
            <person name="Smith T.J."/>
            <person name="Sutton G."/>
            <person name="Brettin T.S."/>
        </authorList>
    </citation>
    <scope>NUCLEOTIDE SEQUENCE [LARGE SCALE GENOMIC DNA]</scope>
    <source>
        <strain>Alaska E43 / Type E3</strain>
    </source>
</reference>
<name>AROA_CLOBA</name>
<comment type="function">
    <text evidence="1">Catalyzes the transfer of the enolpyruvyl moiety of phosphoenolpyruvate (PEP) to the 5-hydroxyl of shikimate-3-phosphate (S3P) to produce enolpyruvyl shikimate-3-phosphate and inorganic phosphate.</text>
</comment>
<comment type="catalytic activity">
    <reaction evidence="1">
        <text>3-phosphoshikimate + phosphoenolpyruvate = 5-O-(1-carboxyvinyl)-3-phosphoshikimate + phosphate</text>
        <dbReference type="Rhea" id="RHEA:21256"/>
        <dbReference type="ChEBI" id="CHEBI:43474"/>
        <dbReference type="ChEBI" id="CHEBI:57701"/>
        <dbReference type="ChEBI" id="CHEBI:58702"/>
        <dbReference type="ChEBI" id="CHEBI:145989"/>
        <dbReference type="EC" id="2.5.1.19"/>
    </reaction>
    <physiologicalReaction direction="left-to-right" evidence="1">
        <dbReference type="Rhea" id="RHEA:21257"/>
    </physiologicalReaction>
</comment>
<comment type="pathway">
    <text evidence="1">Metabolic intermediate biosynthesis; chorismate biosynthesis; chorismate from D-erythrose 4-phosphate and phosphoenolpyruvate: step 6/7.</text>
</comment>
<comment type="subunit">
    <text evidence="1">Monomer.</text>
</comment>
<comment type="subcellular location">
    <subcellularLocation>
        <location evidence="1">Cytoplasm</location>
    </subcellularLocation>
</comment>
<comment type="similarity">
    <text evidence="1">Belongs to the EPSP synthase family.</text>
</comment>
<evidence type="ECO:0000255" key="1">
    <source>
        <dbReference type="HAMAP-Rule" id="MF_00210"/>
    </source>
</evidence>
<proteinExistence type="inferred from homology"/>
<keyword id="KW-0028">Amino-acid biosynthesis</keyword>
<keyword id="KW-0057">Aromatic amino acid biosynthesis</keyword>
<keyword id="KW-0963">Cytoplasm</keyword>
<keyword id="KW-0808">Transferase</keyword>
<accession>B2UYK7</accession>